<organism>
    <name type="scientific">Mycobacterium tuberculosis (strain ATCC 25177 / H37Ra)</name>
    <dbReference type="NCBI Taxonomy" id="419947"/>
    <lineage>
        <taxon>Bacteria</taxon>
        <taxon>Bacillati</taxon>
        <taxon>Actinomycetota</taxon>
        <taxon>Actinomycetes</taxon>
        <taxon>Mycobacteriales</taxon>
        <taxon>Mycobacteriaceae</taxon>
        <taxon>Mycobacterium</taxon>
        <taxon>Mycobacterium tuberculosis complex</taxon>
    </lineage>
</organism>
<reference key="1">
    <citation type="journal article" date="2008" name="PLoS ONE">
        <title>Genetic basis of virulence attenuation revealed by comparative genomic analysis of Mycobacterium tuberculosis strain H37Ra versus H37Rv.</title>
        <authorList>
            <person name="Zheng H."/>
            <person name="Lu L."/>
            <person name="Wang B."/>
            <person name="Pu S."/>
            <person name="Zhang X."/>
            <person name="Zhu G."/>
            <person name="Shi W."/>
            <person name="Zhang L."/>
            <person name="Wang H."/>
            <person name="Wang S."/>
            <person name="Zhao G."/>
            <person name="Zhang Y."/>
        </authorList>
    </citation>
    <scope>NUCLEOTIDE SEQUENCE [LARGE SCALE GENOMIC DNA]</scope>
    <source>
        <strain>ATCC 25177 / H37Ra</strain>
    </source>
</reference>
<name>PSD_MYCTA</name>
<keyword id="KW-1003">Cell membrane</keyword>
<keyword id="KW-0210">Decarboxylase</keyword>
<keyword id="KW-0444">Lipid biosynthesis</keyword>
<keyword id="KW-0443">Lipid metabolism</keyword>
<keyword id="KW-0456">Lyase</keyword>
<keyword id="KW-0472">Membrane</keyword>
<keyword id="KW-0594">Phospholipid biosynthesis</keyword>
<keyword id="KW-1208">Phospholipid metabolism</keyword>
<keyword id="KW-0670">Pyruvate</keyword>
<keyword id="KW-1185">Reference proteome</keyword>
<keyword id="KW-0865">Zymogen</keyword>
<proteinExistence type="inferred from homology"/>
<protein>
    <recommendedName>
        <fullName evidence="1">Phosphatidylserine decarboxylase proenzyme</fullName>
        <ecNumber evidence="1">4.1.1.65</ecNumber>
    </recommendedName>
    <component>
        <recommendedName>
            <fullName evidence="1">Phosphatidylserine decarboxylase alpha chain</fullName>
        </recommendedName>
    </component>
    <component>
        <recommendedName>
            <fullName evidence="1">Phosphatidylserine decarboxylase beta chain</fullName>
        </recommendedName>
    </component>
</protein>
<comment type="function">
    <text evidence="1">Catalyzes the formation of phosphatidylethanolamine (PtdEtn) from phosphatidylserine (PtdSer).</text>
</comment>
<comment type="catalytic activity">
    <reaction evidence="1">
        <text>a 1,2-diacyl-sn-glycero-3-phospho-L-serine + H(+) = a 1,2-diacyl-sn-glycero-3-phosphoethanolamine + CO2</text>
        <dbReference type="Rhea" id="RHEA:20828"/>
        <dbReference type="ChEBI" id="CHEBI:15378"/>
        <dbReference type="ChEBI" id="CHEBI:16526"/>
        <dbReference type="ChEBI" id="CHEBI:57262"/>
        <dbReference type="ChEBI" id="CHEBI:64612"/>
        <dbReference type="EC" id="4.1.1.65"/>
    </reaction>
</comment>
<comment type="cofactor">
    <cofactor evidence="1">
        <name>pyruvate</name>
        <dbReference type="ChEBI" id="CHEBI:15361"/>
    </cofactor>
    <text evidence="1">Binds 1 pyruvoyl group covalently per subunit.</text>
</comment>
<comment type="pathway">
    <text evidence="1">Phospholipid metabolism; phosphatidylethanolamine biosynthesis; phosphatidylethanolamine from CDP-diacylglycerol: step 2/2.</text>
</comment>
<comment type="subunit">
    <text evidence="1">Heterodimer of a large membrane-associated beta subunit and a small pyruvoyl-containing alpha subunit.</text>
</comment>
<comment type="subcellular location">
    <subcellularLocation>
        <location evidence="1">Cell membrane</location>
        <topology evidence="1">Peripheral membrane protein</topology>
    </subcellularLocation>
</comment>
<comment type="PTM">
    <text evidence="1">Is synthesized initially as an inactive proenzyme. Formation of the active enzyme involves a self-maturation process in which the active site pyruvoyl group is generated from an internal serine residue via an autocatalytic post-translational modification. Two non-identical subunits are generated from the proenzyme in this reaction, and the pyruvate is formed at the N-terminus of the alpha chain, which is derived from the carboxyl end of the proenzyme. The post-translation cleavage follows an unusual pathway, termed non-hydrolytic serinolysis, in which the side chain hydroxyl group of the serine supplies its oxygen atom to form the C-terminus of the beta chain, while the remainder of the serine residue undergoes an oxidative deamination to produce ammonia and the pyruvoyl prosthetic group on the alpha chain.</text>
</comment>
<comment type="similarity">
    <text evidence="1">Belongs to the phosphatidylserine decarboxylase family. PSD-A subfamily.</text>
</comment>
<accession>A5TZG3</accession>
<feature type="chain" id="PRO_1000026660" description="Phosphatidylserine decarboxylase beta chain" evidence="1">
    <location>
        <begin position="1"/>
        <end position="199"/>
    </location>
</feature>
<feature type="chain" id="PRO_1000026661" description="Phosphatidylserine decarboxylase alpha chain" evidence="1">
    <location>
        <begin position="200"/>
        <end position="231"/>
    </location>
</feature>
<feature type="active site" description="Schiff-base intermediate with substrate; via pyruvic acid" evidence="1">
    <location>
        <position position="200"/>
    </location>
</feature>
<feature type="site" description="Cleavage (non-hydrolytic); by autocatalysis" evidence="1">
    <location>
        <begin position="199"/>
        <end position="200"/>
    </location>
</feature>
<feature type="modified residue" description="Pyruvic acid (Ser); by autocatalysis" evidence="1">
    <location>
        <position position="200"/>
    </location>
</feature>
<evidence type="ECO:0000255" key="1">
    <source>
        <dbReference type="HAMAP-Rule" id="MF_00664"/>
    </source>
</evidence>
<dbReference type="EC" id="4.1.1.65" evidence="1"/>
<dbReference type="EMBL" id="CP000611">
    <property type="protein sequence ID" value="ABQ72163.1"/>
    <property type="molecule type" value="Genomic_DNA"/>
</dbReference>
<dbReference type="RefSeq" id="WP_003402216.1">
    <property type="nucleotide sequence ID" value="NZ_CP016972.1"/>
</dbReference>
<dbReference type="SMR" id="A5TZG3"/>
<dbReference type="KEGG" id="mra:MRA_0442"/>
<dbReference type="eggNOG" id="COG0688">
    <property type="taxonomic scope" value="Bacteria"/>
</dbReference>
<dbReference type="HOGENOM" id="CLU_072492_0_0_11"/>
<dbReference type="UniPathway" id="UPA00558">
    <property type="reaction ID" value="UER00616"/>
</dbReference>
<dbReference type="Proteomes" id="UP000001988">
    <property type="component" value="Chromosome"/>
</dbReference>
<dbReference type="GO" id="GO:0005886">
    <property type="term" value="C:plasma membrane"/>
    <property type="evidence" value="ECO:0007669"/>
    <property type="project" value="UniProtKB-SubCell"/>
</dbReference>
<dbReference type="GO" id="GO:0004609">
    <property type="term" value="F:phosphatidylserine decarboxylase activity"/>
    <property type="evidence" value="ECO:0007669"/>
    <property type="project" value="UniProtKB-UniRule"/>
</dbReference>
<dbReference type="GO" id="GO:0006646">
    <property type="term" value="P:phosphatidylethanolamine biosynthetic process"/>
    <property type="evidence" value="ECO:0007669"/>
    <property type="project" value="UniProtKB-UniRule"/>
</dbReference>
<dbReference type="HAMAP" id="MF_00664">
    <property type="entry name" value="PS_decarb_PSD_A"/>
    <property type="match status" value="1"/>
</dbReference>
<dbReference type="InterPro" id="IPR003817">
    <property type="entry name" value="PS_Dcarbxylase"/>
</dbReference>
<dbReference type="InterPro" id="IPR033175">
    <property type="entry name" value="PSD-A"/>
</dbReference>
<dbReference type="NCBIfam" id="NF003679">
    <property type="entry name" value="PRK05305.1-3"/>
    <property type="match status" value="1"/>
</dbReference>
<dbReference type="PANTHER" id="PTHR35809">
    <property type="entry name" value="ARCHAETIDYLSERINE DECARBOXYLASE PROENZYME-RELATED"/>
    <property type="match status" value="1"/>
</dbReference>
<dbReference type="PANTHER" id="PTHR35809:SF1">
    <property type="entry name" value="ARCHAETIDYLSERINE DECARBOXYLASE PROENZYME-RELATED"/>
    <property type="match status" value="1"/>
</dbReference>
<dbReference type="Pfam" id="PF02666">
    <property type="entry name" value="PS_Dcarbxylase"/>
    <property type="match status" value="1"/>
</dbReference>
<sequence length="231" mass="24260">MARRPRPDGPQHLLALVRSAVPPVHPAGRPFIAAGLAIAAVGHRYRWLRGTGLLAAAACAGFFRHPQRVPPTRPAAIVAPADGVICAIDSAAPPAELSMGDTPLPRVSIFLSILDAHVQRAPVSGEVIAVQHRPGRFGSADLPEASDDNERTSVRIRMPNGAEVVAVQIAGLVARRIVCDAHVGDKLAIGDTYGLIRFGSRLDTYLPAGAEPIVNVGQRAVAGETVLAECR</sequence>
<gene>
    <name evidence="1" type="primary">psd</name>
    <name type="ordered locus">MRA_0442</name>
</gene>